<reference key="1">
    <citation type="journal article" date="2002" name="J. Neurosci.">
        <title>Delphilin: a novel PDZ and formin homology domain-containing protein that synaptically colocalizes and interacts with glutamate receptor delta 2 subunit.</title>
        <authorList>
            <person name="Miyagi Y."/>
            <person name="Yamashita T."/>
            <person name="Fukaya M."/>
            <person name="Sonoda T."/>
            <person name="Okuno T."/>
            <person name="Yamada K."/>
            <person name="Watanabe M."/>
            <person name="Nagashima Y."/>
            <person name="Aoki I."/>
            <person name="Okuda K."/>
            <person name="Mishina M."/>
            <person name="Kawamoto S."/>
        </authorList>
    </citation>
    <scope>NUCLEOTIDE SEQUENCE [MRNA] (ISOFORM 2)</scope>
    <scope>TISSUE SPECIFICITY</scope>
    <scope>INTERACTION WITH GRID2</scope>
    <source>
        <strain>BALB/cJ</strain>
    </source>
</reference>
<reference key="2">
    <citation type="journal article" date="2006" name="J. Biol. Chem.">
        <title>Characterization of the delta2 glutamate receptor-binding protein delphilin: splicing variants with differential palmitoylation and an additional PDZ domain.</title>
        <authorList>
            <person name="Matsuda K."/>
            <person name="Matsuda S."/>
            <person name="Gladding C.M."/>
            <person name="Yuzaki M."/>
        </authorList>
    </citation>
    <scope>NUCLEOTIDE SEQUENCE [MRNA] (ISOFORM 1)</scope>
    <scope>TISSUE SPECIFICITY</scope>
    <scope>PALMITOYLATION AT CYS-3 (ISOFORM 2)</scope>
    <scope>INTERACTION WITH GRID2</scope>
    <source>
        <tissue>Cerebellum</tissue>
    </source>
</reference>
<reference key="3">
    <citation type="journal article" date="2004" name="Genome Res.">
        <title>The status, quality, and expansion of the NIH full-length cDNA project: the Mammalian Gene Collection (MGC).</title>
        <authorList>
            <consortium name="The MGC Project Team"/>
        </authorList>
    </citation>
    <scope>NUCLEOTIDE SEQUENCE [LARGE SCALE MRNA] (ISOFORM 3)</scope>
    <source>
        <strain>C57BL/6J</strain>
        <tissue>Brain</tissue>
    </source>
</reference>
<reference key="4">
    <citation type="journal article" date="2005" name="Brain Res. Mol. Brain Res.">
        <title>Identification and characterization of a novel Delphilin variant with an alternative N-terminus.</title>
        <authorList>
            <person name="Yamashita T."/>
            <person name="Miyagi Y."/>
            <person name="Ono M."/>
            <person name="Ito H."/>
            <person name="Watanabe K."/>
            <person name="Sonoda T."/>
            <person name="Tsuzuki K."/>
            <person name="Ozawa S."/>
            <person name="Aoki I."/>
            <person name="Okuda K."/>
            <person name="Mishina M."/>
            <person name="Kawamoto S."/>
        </authorList>
    </citation>
    <scope>NUCLEOTIDE SEQUENCE [MRNA] OF 1-184 (ISOFORM 2)</scope>
    <scope>NUCLEOTIDE SEQUENCE [MRNA] OF 1-183 (ISOFORM 3)</scope>
    <scope>INTERACTION WITH GRID2</scope>
    <scope>DEVELOPMENTAL STAGE</scope>
    <scope>SUBCELLULAR LOCATION</scope>
</reference>
<reference key="5">
    <citation type="journal article" date="2006" name="Biochem. Biophys. Res. Commun.">
        <title>Binding of glutamate receptor delta2 to its scaffold protein, Delphilin, is regulated by PKA.</title>
        <authorList>
            <person name="Sonoda T."/>
            <person name="Mochizuki C."/>
            <person name="Yamashita T."/>
            <person name="Watanabe-Kaneko K."/>
            <person name="Miyagi Y."/>
            <person name="Shigeri Y."/>
            <person name="Yazama F."/>
            <person name="Okuda K."/>
            <person name="Kawamoto S."/>
        </authorList>
    </citation>
    <scope>INTERACTION WITH GRID2</scope>
</reference>
<reference key="6">
    <citation type="journal article" date="2007" name="Eur. J. Neurosci.">
        <title>The extreme C-terminus of GluRdelta2 is essential for induction of long-term depression in cerebellar slices.</title>
        <authorList>
            <person name="Kohda K."/>
            <person name="Kakegawa W."/>
            <person name="Matsuda S."/>
            <person name="Nakagami R."/>
            <person name="Kakiya N."/>
            <person name="Yuzaki M."/>
        </authorList>
    </citation>
    <scope>INTERACTION WITH GRID2</scope>
</reference>
<reference key="7">
    <citation type="journal article" date="2007" name="NeuroReport">
        <title>The synaptic scaffolding protein Delphilin interacts with monocarboxylate transporter 2.</title>
        <authorList>
            <person name="Watanabe-Kaneko K."/>
            <person name="Sonoda T."/>
            <person name="Miyagi Y."/>
            <person name="Yamashita T."/>
            <person name="Okuda K."/>
            <person name="Kawamoto S."/>
        </authorList>
    </citation>
    <scope>INTERACTION WITH SLC16A7</scope>
</reference>
<reference key="8">
    <citation type="journal article" date="2010" name="Cell">
        <title>A tissue-specific atlas of mouse protein phosphorylation and expression.</title>
        <authorList>
            <person name="Huttlin E.L."/>
            <person name="Jedrychowski M.P."/>
            <person name="Elias J.E."/>
            <person name="Goswami T."/>
            <person name="Rad R."/>
            <person name="Beausoleil S.A."/>
            <person name="Villen J."/>
            <person name="Haas W."/>
            <person name="Sowa M.E."/>
            <person name="Gygi S.P."/>
        </authorList>
    </citation>
    <scope>PHOSPHORYLATION [LARGE SCALE ANALYSIS] AT SER-303; SER-572; SER-613; SER-644 AND SER-647</scope>
    <scope>IDENTIFICATION BY MASS SPECTROMETRY [LARGE SCALE ANALYSIS]</scope>
    <source>
        <tissue>Brain</tissue>
    </source>
</reference>
<name>GRD2I_MOUSE</name>
<comment type="function">
    <text>Postsynaptic scaffolding protein at the Purkinje cell synapse, where it may serve to link GRID2 with actin cytoskeleton and various signaling molecules.</text>
</comment>
<comment type="subunit">
    <text evidence="4 5 6 7 8 9">Interacts with C-terminus of the glutamate receptor GRID2 via PDZ domain. Isoform 2 also interacts with Profilin-2/PFN2 and with the monocarboxylate transporter SLC16A7 via PDZ domain. The interaction of isoform 2 with GRID2 is dependent on GRID2 phosphorylation by PKA.</text>
</comment>
<comment type="subcellular location">
    <molecule>Isoform 2</molecule>
    <subcellularLocation>
        <location>Postsynaptic cell membrane</location>
    </subcellularLocation>
    <subcellularLocation>
        <location>Cell projection</location>
        <location>Dendritic spine</location>
    </subcellularLocation>
    <text>Localized to the postsynaptic junction site of the parallel fiber-Purkinje cell synapse. Highly present in the dendritic spines.</text>
</comment>
<comment type="subcellular location">
    <molecule>Isoform 3</molecule>
    <subcellularLocation>
        <location>Synapse</location>
    </subcellularLocation>
    <subcellularLocation>
        <location>Cell projection</location>
        <location>Dendritic spine</location>
    </subcellularLocation>
    <subcellularLocation>
        <location evidence="13">Cell membrane</location>
        <topology evidence="13">Lipid-anchor</topology>
    </subcellularLocation>
    <text>Localized at the dendritic spines, but also in dendritic shafts apart fron spines.</text>
</comment>
<comment type="alternative products">
    <event type="alternative splicing"/>
    <isoform>
        <id>Q0QWG9-1</id>
        <name>1</name>
        <name>L-delphilin</name>
        <sequence type="displayed"/>
    </isoform>
    <isoform>
        <id>Q0QWG9-2</id>
        <name>2</name>
        <name>S-delphilin</name>
        <name>delphilin alpha</name>
        <sequence type="described" ref="VSP_033275 VSP_033278"/>
    </isoform>
    <isoform>
        <id>Q0QWG9-3</id>
        <name>3</name>
        <name>delphilin beta</name>
        <sequence type="described" ref="VSP_033276 VSP_033277"/>
    </isoform>
</comment>
<comment type="tissue specificity">
    <text evidence="4 6">Isoform 1 is expressed in the cerebellum, but not in the cerebral cortex. Isoform 2 is expressed in the cell body of purkinge cells of the cerebellum and weakly expressed in the cerebrum and the brainstem as well as various nuclei of the thalamus. Isoform 2 is highly expressed in the cerebral cortex than in the cerebellum. Isoform 3 is expressed in the cerebellum and cerebrum.</text>
</comment>
<comment type="developmental stage">
    <text evidence="5">Isoform 3 expression is maintained throughout cerebellar development, while isoform 2 expression gradually decrease following the first postnatal week.</text>
</comment>
<comment type="domain">
    <text>PDZ 1 domain is responsible for cytoplasmic clustering of isoform 1.</text>
</comment>
<comment type="PTM">
    <text>Isoform 2 is palmitoylated. Palmitoylation of isoform 2 is necessary for the enhanced cell surface expression of GRID2, and is also responsible for the accumulation of isoform 2 within dendritic spines. Isoform 1 and isoform 2 are differentially localized, probably modulating GRID2 signaling in neurons.</text>
</comment>
<comment type="miscellaneous">
    <text>Isoform 1 shows a punctate distribution throughout the cytoplasm when expressed in COS cells, whereas isoform 2 is enriched at the edges of the plasma membranes. When expressed in cultured hippocampal neurons, isoform 1 forms clusters mainly in the dendritic shafts, whereas isoform 2 is preferentially expressed in spines.</text>
</comment>
<comment type="miscellaneous">
    <molecule>Isoform 1</molecule>
    <text>Not palmitoylated.</text>
</comment>
<comment type="miscellaneous">
    <molecule>Isoform 2</molecule>
    <text evidence="13">When Cys-3 is mutated to Ala-3, isoform 2 is not palmitoylated anymore.</text>
</comment>
<accession>Q0QWG9</accession>
<accession>Q6DID0</accession>
<accession>Q9ESJ5</accession>
<keyword id="KW-0025">Alternative splicing</keyword>
<keyword id="KW-1003">Cell membrane</keyword>
<keyword id="KW-0966">Cell projection</keyword>
<keyword id="KW-0449">Lipoprotein</keyword>
<keyword id="KW-0472">Membrane</keyword>
<keyword id="KW-0564">Palmitate</keyword>
<keyword id="KW-0597">Phosphoprotein</keyword>
<keyword id="KW-0628">Postsynaptic cell membrane</keyword>
<keyword id="KW-1185">Reference proteome</keyword>
<keyword id="KW-0677">Repeat</keyword>
<keyword id="KW-0770">Synapse</keyword>
<evidence type="ECO:0000255" key="1">
    <source>
        <dbReference type="PROSITE-ProRule" id="PRU00143"/>
    </source>
</evidence>
<evidence type="ECO:0000255" key="2">
    <source>
        <dbReference type="PROSITE-ProRule" id="PRU00774"/>
    </source>
</evidence>
<evidence type="ECO:0000256" key="3">
    <source>
        <dbReference type="SAM" id="MobiDB-lite"/>
    </source>
</evidence>
<evidence type="ECO:0000269" key="4">
    <source>
    </source>
</evidence>
<evidence type="ECO:0000269" key="5">
    <source>
    </source>
</evidence>
<evidence type="ECO:0000269" key="6">
    <source>
    </source>
</evidence>
<evidence type="ECO:0000269" key="7">
    <source>
    </source>
</evidence>
<evidence type="ECO:0000269" key="8">
    <source>
    </source>
</evidence>
<evidence type="ECO:0000269" key="9">
    <source>
    </source>
</evidence>
<evidence type="ECO:0000303" key="10">
    <source>
    </source>
</evidence>
<evidence type="ECO:0000303" key="11">
    <source>
    </source>
</evidence>
<evidence type="ECO:0000303" key="12">
    <source>
    </source>
</evidence>
<evidence type="ECO:0000305" key="13"/>
<evidence type="ECO:0007744" key="14">
    <source>
    </source>
</evidence>
<protein>
    <recommendedName>
        <fullName>Delphilin</fullName>
    </recommendedName>
    <alternativeName>
        <fullName>Glutamate receptor, ionotropic, delta 2-interacting protein 1</fullName>
    </alternativeName>
</protein>
<dbReference type="EMBL" id="DQ193535">
    <property type="protein sequence ID" value="ABB04525.1"/>
    <property type="molecule type" value="mRNA"/>
</dbReference>
<dbReference type="EMBL" id="AF099933">
    <property type="protein sequence ID" value="AAG31020.1"/>
    <property type="molecule type" value="mRNA"/>
</dbReference>
<dbReference type="EMBL" id="BC075624">
    <property type="protein sequence ID" value="AAH75624.1"/>
    <property type="molecule type" value="mRNA"/>
</dbReference>
<dbReference type="EMBL" id="AY377834">
    <property type="status" value="NOT_ANNOTATED_CDS"/>
    <property type="molecule type" value="mRNA"/>
</dbReference>
<dbReference type="EMBL" id="AY377835">
    <property type="status" value="NOT_ANNOTATED_CDS"/>
    <property type="molecule type" value="mRNA"/>
</dbReference>
<dbReference type="CCDS" id="CCDS19841.1">
    <molecule id="Q0QWG9-2"/>
</dbReference>
<dbReference type="CCDS" id="CCDS51689.1">
    <molecule id="Q0QWG9-1"/>
</dbReference>
<dbReference type="CCDS" id="CCDS84992.1">
    <molecule id="Q0QWG9-3"/>
</dbReference>
<dbReference type="RefSeq" id="NP_001152793.1">
    <molecule id="Q0QWG9-1"/>
    <property type="nucleotide sequence ID" value="NM_001159321.2"/>
</dbReference>
<dbReference type="RefSeq" id="NP_001334458.1">
    <molecule id="Q0QWG9-3"/>
    <property type="nucleotide sequence ID" value="NM_001347529.2"/>
</dbReference>
<dbReference type="RefSeq" id="NP_579933.1">
    <molecule id="Q0QWG9-2"/>
    <property type="nucleotide sequence ID" value="NM_133355.2"/>
</dbReference>
<dbReference type="SMR" id="Q0QWG9"/>
<dbReference type="BioGRID" id="228467">
    <property type="interactions" value="4"/>
</dbReference>
<dbReference type="FunCoup" id="Q0QWG9">
    <property type="interactions" value="28"/>
</dbReference>
<dbReference type="IntAct" id="Q0QWG9">
    <property type="interactions" value="1"/>
</dbReference>
<dbReference type="MINT" id="Q0QWG9"/>
<dbReference type="STRING" id="10090.ENSMUSP00000106361"/>
<dbReference type="GlyGen" id="Q0QWG9">
    <property type="glycosylation" value="5 sites, 2 N-linked glycans (2 sites), 1 O-linked glycan (2 sites)"/>
</dbReference>
<dbReference type="iPTMnet" id="Q0QWG9"/>
<dbReference type="PhosphoSitePlus" id="Q0QWG9"/>
<dbReference type="SwissPalm" id="Q0QWG9"/>
<dbReference type="jPOST" id="Q0QWG9"/>
<dbReference type="PaxDb" id="10090-ENSMUSP00000106361"/>
<dbReference type="PeptideAtlas" id="Q0QWG9"/>
<dbReference type="ProteomicsDB" id="271086">
    <molecule id="Q0QWG9-1"/>
</dbReference>
<dbReference type="ProteomicsDB" id="271087">
    <molecule id="Q0QWG9-2"/>
</dbReference>
<dbReference type="ProteomicsDB" id="271088">
    <molecule id="Q0QWG9-3"/>
</dbReference>
<dbReference type="Antibodypedia" id="49924">
    <property type="antibodies" value="78 antibodies from 16 providers"/>
</dbReference>
<dbReference type="DNASU" id="170935"/>
<dbReference type="Ensembl" id="ENSMUST00000010969.15">
    <molecule id="Q0QWG9-2"/>
    <property type="protein sequence ID" value="ENSMUSP00000010969.9"/>
    <property type="gene ID" value="ENSMUSG00000010825.18"/>
</dbReference>
<dbReference type="Ensembl" id="ENSMUST00000110733.9">
    <molecule id="Q0QWG9-1"/>
    <property type="protein sequence ID" value="ENSMUSP00000106361.3"/>
    <property type="gene ID" value="ENSMUSG00000010825.18"/>
</dbReference>
<dbReference type="Ensembl" id="ENSMUST00000120825.2">
    <molecule id="Q0QWG9-3"/>
    <property type="protein sequence ID" value="ENSMUSP00000113443.2"/>
    <property type="gene ID" value="ENSMUSG00000010825.18"/>
</dbReference>
<dbReference type="GeneID" id="170935"/>
<dbReference type="KEGG" id="mmu:170935"/>
<dbReference type="UCSC" id="uc009akd.1">
    <molecule id="Q0QWG9-1"/>
    <property type="organism name" value="mouse"/>
</dbReference>
<dbReference type="UCSC" id="uc009ake.1">
    <molecule id="Q0QWG9-2"/>
    <property type="organism name" value="mouse"/>
</dbReference>
<dbReference type="UCSC" id="uc009akf.1">
    <molecule id="Q0QWG9-3"/>
    <property type="organism name" value="mouse"/>
</dbReference>
<dbReference type="AGR" id="MGI:2176213"/>
<dbReference type="CTD" id="392862"/>
<dbReference type="MGI" id="MGI:2176213">
    <property type="gene designation" value="Grid2ip"/>
</dbReference>
<dbReference type="VEuPathDB" id="HostDB:ENSMUSG00000010825"/>
<dbReference type="eggNOG" id="KOG1922">
    <property type="taxonomic scope" value="Eukaryota"/>
</dbReference>
<dbReference type="eggNOG" id="KOG3528">
    <property type="taxonomic scope" value="Eukaryota"/>
</dbReference>
<dbReference type="eggNOG" id="KOG3589">
    <property type="taxonomic scope" value="Eukaryota"/>
</dbReference>
<dbReference type="GeneTree" id="ENSGT00940000157625"/>
<dbReference type="HOGENOM" id="CLU_002818_0_0_1"/>
<dbReference type="InParanoid" id="Q0QWG9"/>
<dbReference type="OMA" id="TGPCYIL"/>
<dbReference type="OrthoDB" id="410721at2759"/>
<dbReference type="PhylomeDB" id="Q0QWG9"/>
<dbReference type="TreeFam" id="TF329416"/>
<dbReference type="BioGRID-ORCS" id="170935">
    <property type="hits" value="2 hits in 74 CRISPR screens"/>
</dbReference>
<dbReference type="ChiTaRS" id="Grid2ip">
    <property type="organism name" value="mouse"/>
</dbReference>
<dbReference type="PRO" id="PR:Q0QWG9"/>
<dbReference type="Proteomes" id="UP000000589">
    <property type="component" value="Chromosome 5"/>
</dbReference>
<dbReference type="RNAct" id="Q0QWG9">
    <property type="molecule type" value="protein"/>
</dbReference>
<dbReference type="Bgee" id="ENSMUSG00000010825">
    <property type="expression patterns" value="Expressed in rostral migratory stream and 38 other cell types or tissues"/>
</dbReference>
<dbReference type="GO" id="GO:0150048">
    <property type="term" value="C:cerebellar granule cell to Purkinje cell synapse"/>
    <property type="evidence" value="ECO:0000314"/>
    <property type="project" value="SynGO"/>
</dbReference>
<dbReference type="GO" id="GO:0043197">
    <property type="term" value="C:dendritic spine"/>
    <property type="evidence" value="ECO:0000314"/>
    <property type="project" value="MGI"/>
</dbReference>
<dbReference type="GO" id="GO:0098978">
    <property type="term" value="C:glutamatergic synapse"/>
    <property type="evidence" value="ECO:0000314"/>
    <property type="project" value="SynGO"/>
</dbReference>
<dbReference type="GO" id="GO:0098688">
    <property type="term" value="C:parallel fiber to Purkinje cell synapse"/>
    <property type="evidence" value="ECO:0000314"/>
    <property type="project" value="SynGO"/>
</dbReference>
<dbReference type="GO" id="GO:0099092">
    <property type="term" value="C:postsynaptic density, intracellular component"/>
    <property type="evidence" value="ECO:0000314"/>
    <property type="project" value="SynGO"/>
</dbReference>
<dbReference type="GO" id="GO:0045211">
    <property type="term" value="C:postsynaptic membrane"/>
    <property type="evidence" value="ECO:0007669"/>
    <property type="project" value="UniProtKB-SubCell"/>
</dbReference>
<dbReference type="GO" id="GO:0045202">
    <property type="term" value="C:synapse"/>
    <property type="evidence" value="ECO:0000314"/>
    <property type="project" value="MGI"/>
</dbReference>
<dbReference type="GO" id="GO:0030036">
    <property type="term" value="P:actin cytoskeleton organization"/>
    <property type="evidence" value="ECO:0000304"/>
    <property type="project" value="MGI"/>
</dbReference>
<dbReference type="GO" id="GO:0007216">
    <property type="term" value="P:G protein-coupled glutamate receptor signaling pathway"/>
    <property type="evidence" value="ECO:0000304"/>
    <property type="project" value="MGI"/>
</dbReference>
<dbReference type="GO" id="GO:0060292">
    <property type="term" value="P:long-term synaptic depression"/>
    <property type="evidence" value="ECO:0000315"/>
    <property type="project" value="MGI"/>
</dbReference>
<dbReference type="GO" id="GO:0099566">
    <property type="term" value="P:regulation of postsynaptic cytosolic calcium ion concentration"/>
    <property type="evidence" value="ECO:0000314"/>
    <property type="project" value="SynGO"/>
</dbReference>
<dbReference type="GO" id="GO:0099072">
    <property type="term" value="P:regulation of postsynaptic membrane neurotransmitter receptor levels"/>
    <property type="evidence" value="ECO:0000314"/>
    <property type="project" value="SynGO"/>
</dbReference>
<dbReference type="CDD" id="cd07354">
    <property type="entry name" value="HN_L-delphilin-R1_like"/>
    <property type="match status" value="1"/>
</dbReference>
<dbReference type="CDD" id="cd07355">
    <property type="entry name" value="HN_L-delphilin-R2_like"/>
    <property type="match status" value="1"/>
</dbReference>
<dbReference type="CDD" id="cd06743">
    <property type="entry name" value="PDZ1_L-delphilin-like"/>
    <property type="match status" value="1"/>
</dbReference>
<dbReference type="CDD" id="cd06744">
    <property type="entry name" value="PDZ2_L-delphilin-like"/>
    <property type="match status" value="1"/>
</dbReference>
<dbReference type="FunFam" id="1.20.58.2220:FF:000008">
    <property type="entry name" value="Grid2 interacting protein"/>
    <property type="match status" value="1"/>
</dbReference>
<dbReference type="Gene3D" id="1.20.1160.20">
    <property type="match status" value="2"/>
</dbReference>
<dbReference type="Gene3D" id="2.30.42.10">
    <property type="match status" value="2"/>
</dbReference>
<dbReference type="Gene3D" id="1.20.58.2220">
    <property type="entry name" value="Formin, FH2 domain"/>
    <property type="match status" value="1"/>
</dbReference>
<dbReference type="InterPro" id="IPR015425">
    <property type="entry name" value="FH2_Formin"/>
</dbReference>
<dbReference type="InterPro" id="IPR042201">
    <property type="entry name" value="FH2_Formin_sf"/>
</dbReference>
<dbReference type="InterPro" id="IPR051425">
    <property type="entry name" value="Formin_Homology"/>
</dbReference>
<dbReference type="InterPro" id="IPR001478">
    <property type="entry name" value="PDZ"/>
</dbReference>
<dbReference type="InterPro" id="IPR036034">
    <property type="entry name" value="PDZ_sf"/>
</dbReference>
<dbReference type="PANTHER" id="PTHR45725:SF3">
    <property type="entry name" value="DELPHILIN"/>
    <property type="match status" value="1"/>
</dbReference>
<dbReference type="PANTHER" id="PTHR45725">
    <property type="entry name" value="FORMIN HOMOLOGY 2 FAMILY MEMBER"/>
    <property type="match status" value="1"/>
</dbReference>
<dbReference type="Pfam" id="PF02181">
    <property type="entry name" value="FH2"/>
    <property type="match status" value="1"/>
</dbReference>
<dbReference type="Pfam" id="PF00595">
    <property type="entry name" value="PDZ"/>
    <property type="match status" value="2"/>
</dbReference>
<dbReference type="SMART" id="SM00498">
    <property type="entry name" value="FH2"/>
    <property type="match status" value="1"/>
</dbReference>
<dbReference type="SMART" id="SM00228">
    <property type="entry name" value="PDZ"/>
    <property type="match status" value="2"/>
</dbReference>
<dbReference type="SUPFAM" id="SSF101447">
    <property type="entry name" value="Formin homology 2 domain (FH2 domain)"/>
    <property type="match status" value="1"/>
</dbReference>
<dbReference type="SUPFAM" id="SSF50156">
    <property type="entry name" value="PDZ domain-like"/>
    <property type="match status" value="2"/>
</dbReference>
<dbReference type="PROSITE" id="PS51444">
    <property type="entry name" value="FH2"/>
    <property type="match status" value="1"/>
</dbReference>
<dbReference type="PROSITE" id="PS50106">
    <property type="entry name" value="PDZ"/>
    <property type="match status" value="2"/>
</dbReference>
<sequence length="1203" mass="132021">MPATNQGWPEDFGFQLGGSGPCFVIEVAEGSSAHAGGLRPGDQILEVEGLAVGGLSRERIVRLARRCPRVPPSLGVLPGPEGGPTALTAAWLTRRFGRSLPLSRELLRLAGGPRPDAVHRERRRKAQEFSCQVDDILGDRLTAKEQVFTALKQFAAEQRVDELVWTLTLVLPSEAQGPVLDNLRIFIPKKHRARFDEVVSQGLLGKLCRARRAQGAQRLRRSRSEERPERLLVSTRASAAPRRPDEPPPRKATSLLGGRTGPGGPRRTVRVYKGNKSFGFTLRGHGPVWIESVLPGSPAENASLKSGDRILFLNGLDMRNCSHDKVVSMLQGSGAMPTLVVEEGPVPFASDSDSLDSPTRASALTSLQWVADILPSSIRVQGRTFSQQLDHLLTPPERYGVCRALERFFQHRNIDTLIVDVYPVLDTPAKQVLWQFLYQLLTYEEQELCQEKIACFLGYTAMTEPESSLDLEPESTPEPTPEPQPRSSLRASSMCRRSLRSQGLETSLSCGPGDCPEMPLPLIPGERQAGDGTSLPETPNPKMMSAVYAELESRLNSSFKGKIGTMSKSRASPPVPSLVGTSGPRTLSGVSWPSDRLLPSPCYDPLCSGGLASPSSSESHPYASLDSSRAPSPQPGLGSIHADSPPSPDPIRPPSRRKLFAFSRPVRSRDTDRFLDALSEQLGPRLSIVDDFLTPENDYEEMSFHDDQGSFVTNERSSASECVSSSEEGSSLTYSSISDHIPPPPLSPPPPPPLPFHDPKPSSRTSDGPRGPPQSLTKPLTQINHPVPPPPPPPLPPPVPCAPPMLSRGVGHRRSETSHMSVKRLRWEQVENSEGTIWGQLGEDSDYDKLSDMVKYLDLELHFGTQKPPKPVPGPEPFRKKEVVEILSHKKAYNTSILLAHLKLTPGELRQVLMSMEPRRLEPAHLAQLLLFAPDADEEQRYQAFREAPGRLSEPDQFVLQMLSVPEYKTRLRSLHFQATLQEKTEEIRGSLECLRQASLELKNSRKLAKILEFVLAMGNYLNDGQPKTNKTTGFKINFLTELNSTKTVDGKSTFLHILAKSLSQHFPELLGFAQDLPTVPLAAKVNQRALTGDLADLHDTVSEIQVACQSMAPSSEDRFAVVMASFLETAQPALRALDGLQREAMEELGKALAFFGEDSKATTSEAFFGIFSEFMSKFERALSDLQAGDGPRSSGMVSPLAW</sequence>
<proteinExistence type="evidence at protein level"/>
<organism>
    <name type="scientific">Mus musculus</name>
    <name type="common">Mouse</name>
    <dbReference type="NCBI Taxonomy" id="10090"/>
    <lineage>
        <taxon>Eukaryota</taxon>
        <taxon>Metazoa</taxon>
        <taxon>Chordata</taxon>
        <taxon>Craniata</taxon>
        <taxon>Vertebrata</taxon>
        <taxon>Euteleostomi</taxon>
        <taxon>Mammalia</taxon>
        <taxon>Eutheria</taxon>
        <taxon>Euarchontoglires</taxon>
        <taxon>Glires</taxon>
        <taxon>Rodentia</taxon>
        <taxon>Myomorpha</taxon>
        <taxon>Muroidea</taxon>
        <taxon>Muridae</taxon>
        <taxon>Murinae</taxon>
        <taxon>Mus</taxon>
        <taxon>Mus</taxon>
    </lineage>
</organism>
<feature type="chain" id="PRO_0000331625" description="Delphilin">
    <location>
        <begin position="1"/>
        <end position="1203"/>
    </location>
</feature>
<feature type="domain" description="PDZ 1" evidence="1">
    <location>
        <begin position="1"/>
        <end position="79"/>
    </location>
</feature>
<feature type="domain" description="PDZ 2" evidence="1">
    <location>
        <begin position="268"/>
        <end position="345"/>
    </location>
</feature>
<feature type="domain" description="FH2" evidence="2">
    <location>
        <begin position="812"/>
        <end position="1203"/>
    </location>
</feature>
<feature type="region of interest" description="Disordered" evidence="3">
    <location>
        <begin position="215"/>
        <end position="270"/>
    </location>
</feature>
<feature type="region of interest" description="Disordered" evidence="3">
    <location>
        <begin position="466"/>
        <end position="541"/>
    </location>
</feature>
<feature type="region of interest" description="Disordered" evidence="3">
    <location>
        <begin position="563"/>
        <end position="586"/>
    </location>
</feature>
<feature type="region of interest" description="Disordered" evidence="3">
    <location>
        <begin position="611"/>
        <end position="656"/>
    </location>
</feature>
<feature type="region of interest" description="Disordered" evidence="3">
    <location>
        <begin position="710"/>
        <end position="821"/>
    </location>
</feature>
<feature type="compositionally biased region" description="Low complexity" evidence="3">
    <location>
        <begin position="231"/>
        <end position="241"/>
    </location>
</feature>
<feature type="compositionally biased region" description="Polar residues" evidence="3">
    <location>
        <begin position="500"/>
        <end position="509"/>
    </location>
</feature>
<feature type="compositionally biased region" description="Low complexity" evidence="3">
    <location>
        <begin position="611"/>
        <end position="625"/>
    </location>
</feature>
<feature type="compositionally biased region" description="Low complexity" evidence="3">
    <location>
        <begin position="715"/>
        <end position="740"/>
    </location>
</feature>
<feature type="compositionally biased region" description="Pro residues" evidence="3">
    <location>
        <begin position="741"/>
        <end position="756"/>
    </location>
</feature>
<feature type="compositionally biased region" description="Polar residues" evidence="3">
    <location>
        <begin position="774"/>
        <end position="784"/>
    </location>
</feature>
<feature type="compositionally biased region" description="Pro residues" evidence="3">
    <location>
        <begin position="786"/>
        <end position="803"/>
    </location>
</feature>
<feature type="modified residue" description="Phosphoserine" evidence="14">
    <location>
        <position position="303"/>
    </location>
</feature>
<feature type="modified residue" description="Phosphoserine" evidence="14">
    <location>
        <position position="572"/>
    </location>
</feature>
<feature type="modified residue" description="Phosphoserine" evidence="14">
    <location>
        <position position="613"/>
    </location>
</feature>
<feature type="modified residue" description="Phosphoserine" evidence="14">
    <location>
        <position position="644"/>
    </location>
</feature>
<feature type="modified residue" description="Phosphoserine" evidence="14">
    <location>
        <position position="647"/>
    </location>
</feature>
<feature type="splice variant" id="VSP_033275" description="In isoform 2." evidence="10 12">
    <location>
        <begin position="1"/>
        <end position="179"/>
    </location>
</feature>
<feature type="splice variant" id="VSP_033276" description="In isoform 3." evidence="11 12">
    <location>
        <begin position="1"/>
        <end position="172"/>
    </location>
</feature>
<feature type="splice variant" id="VSP_033277" description="In isoform 3." evidence="11 12">
    <original>SEAQGPVLDNL</original>
    <variation>MGKDQGFSRHF</variation>
    <location>
        <begin position="173"/>
        <end position="183"/>
    </location>
</feature>
<feature type="splice variant" id="VSP_033278" description="In isoform 2." evidence="10 12">
    <original>LDNLR</original>
    <variation>MSCLG</variation>
    <location>
        <begin position="180"/>
        <end position="184"/>
    </location>
</feature>
<feature type="lipid moiety-binding region" description="S-palmitoyl cysteine" evidence="6">
    <location sequence="Q0QWG9-2">
        <position position="3"/>
    </location>
</feature>
<gene>
    <name type="primary">Grid2ip</name>
</gene>